<keyword id="KW-0963">Cytoplasm</keyword>
<keyword id="KW-0238">DNA-binding</keyword>
<keyword id="KW-1185">Reference proteome</keyword>
<keyword id="KW-0804">Transcription</keyword>
<keyword id="KW-0805">Transcription regulation</keyword>
<proteinExistence type="inferred from homology"/>
<organism>
    <name type="scientific">Malacoplasma penetrans (strain HF-2)</name>
    <name type="common">Mycoplasma penetrans</name>
    <dbReference type="NCBI Taxonomy" id="272633"/>
    <lineage>
        <taxon>Bacteria</taxon>
        <taxon>Bacillati</taxon>
        <taxon>Mycoplasmatota</taxon>
        <taxon>Mycoplasmoidales</taxon>
        <taxon>Mycoplasmoidaceae</taxon>
        <taxon>Malacoplasma</taxon>
    </lineage>
</organism>
<accession>Q8EUW6</accession>
<sequence>MPRKHLIASGINKKQQTQAKLGNKLAKEIKAAAKVGGPNPEANPRLKAAIDKALQNNLSKESIEKNINGSIKDPSSLTDAEYEGYGPNGLRIIIKTLSDNDNRTISSLRGYFSKLKGEIAKPNSVKNSFIYGGEIIISNKDLTEDDLMEKILLSLEKIEVTDNDEPIQETNQHEDCFQIIVMPKYFYKIRQELETLGLKIIESEIKYIPTDYVDLNKEDYARLERFLDSCNEDDDVQWVISNFGEVIE</sequence>
<protein>
    <recommendedName>
        <fullName evidence="1">Probable transcriptional regulatory protein MYPE8020</fullName>
    </recommendedName>
</protein>
<gene>
    <name type="ordered locus">MYPE8020</name>
</gene>
<comment type="subcellular location">
    <subcellularLocation>
        <location evidence="1">Cytoplasm</location>
    </subcellularLocation>
</comment>
<comment type="similarity">
    <text evidence="1">Belongs to the TACO1 family.</text>
</comment>
<evidence type="ECO:0000255" key="1">
    <source>
        <dbReference type="HAMAP-Rule" id="MF_00693"/>
    </source>
</evidence>
<dbReference type="EMBL" id="BA000026">
    <property type="protein sequence ID" value="BAC44595.1"/>
    <property type="molecule type" value="Genomic_DNA"/>
</dbReference>
<dbReference type="RefSeq" id="WP_011077624.1">
    <property type="nucleotide sequence ID" value="NC_004432.1"/>
</dbReference>
<dbReference type="SMR" id="Q8EUW6"/>
<dbReference type="FunCoup" id="Q8EUW6">
    <property type="interactions" value="218"/>
</dbReference>
<dbReference type="STRING" id="272633.gene:10731924"/>
<dbReference type="KEGG" id="mpe:MYPE8020"/>
<dbReference type="eggNOG" id="COG0217">
    <property type="taxonomic scope" value="Bacteria"/>
</dbReference>
<dbReference type="HOGENOM" id="CLU_062974_2_2_14"/>
<dbReference type="InParanoid" id="Q8EUW6"/>
<dbReference type="Proteomes" id="UP000002522">
    <property type="component" value="Chromosome"/>
</dbReference>
<dbReference type="GO" id="GO:0005829">
    <property type="term" value="C:cytosol"/>
    <property type="evidence" value="ECO:0007669"/>
    <property type="project" value="TreeGrafter"/>
</dbReference>
<dbReference type="GO" id="GO:0003677">
    <property type="term" value="F:DNA binding"/>
    <property type="evidence" value="ECO:0007669"/>
    <property type="project" value="UniProtKB-UniRule"/>
</dbReference>
<dbReference type="GO" id="GO:0006355">
    <property type="term" value="P:regulation of DNA-templated transcription"/>
    <property type="evidence" value="ECO:0007669"/>
    <property type="project" value="UniProtKB-UniRule"/>
</dbReference>
<dbReference type="Gene3D" id="1.10.10.200">
    <property type="match status" value="1"/>
</dbReference>
<dbReference type="Gene3D" id="3.30.70.980">
    <property type="match status" value="2"/>
</dbReference>
<dbReference type="HAMAP" id="MF_00693">
    <property type="entry name" value="Transcrip_reg_TACO1"/>
    <property type="match status" value="1"/>
</dbReference>
<dbReference type="InterPro" id="IPR017856">
    <property type="entry name" value="Integrase-like_N"/>
</dbReference>
<dbReference type="InterPro" id="IPR048300">
    <property type="entry name" value="TACO1_YebC-like_2nd/3rd_dom"/>
</dbReference>
<dbReference type="InterPro" id="IPR049083">
    <property type="entry name" value="TACO1_YebC_N"/>
</dbReference>
<dbReference type="InterPro" id="IPR002876">
    <property type="entry name" value="Transcrip_reg_TACO1-like"/>
</dbReference>
<dbReference type="InterPro" id="IPR026564">
    <property type="entry name" value="Transcrip_reg_TACO1-like_dom3"/>
</dbReference>
<dbReference type="InterPro" id="IPR029072">
    <property type="entry name" value="YebC-like"/>
</dbReference>
<dbReference type="NCBIfam" id="NF009044">
    <property type="entry name" value="PRK12378.1"/>
    <property type="match status" value="1"/>
</dbReference>
<dbReference type="NCBIfam" id="TIGR01033">
    <property type="entry name" value="YebC/PmpR family DNA-binding transcriptional regulator"/>
    <property type="match status" value="1"/>
</dbReference>
<dbReference type="PANTHER" id="PTHR12532:SF6">
    <property type="entry name" value="TRANSCRIPTIONAL REGULATORY PROTEIN YEBC-RELATED"/>
    <property type="match status" value="1"/>
</dbReference>
<dbReference type="PANTHER" id="PTHR12532">
    <property type="entry name" value="TRANSLATIONAL ACTIVATOR OF CYTOCHROME C OXIDASE 1"/>
    <property type="match status" value="1"/>
</dbReference>
<dbReference type="Pfam" id="PF20772">
    <property type="entry name" value="TACO1_YebC_N"/>
    <property type="match status" value="1"/>
</dbReference>
<dbReference type="Pfam" id="PF01709">
    <property type="entry name" value="Transcrip_reg"/>
    <property type="match status" value="1"/>
</dbReference>
<dbReference type="SUPFAM" id="SSF75625">
    <property type="entry name" value="YebC-like"/>
    <property type="match status" value="1"/>
</dbReference>
<name>Y802_MALP2</name>
<feature type="chain" id="PRO_0000175850" description="Probable transcriptional regulatory protein MYPE8020">
    <location>
        <begin position="1"/>
        <end position="248"/>
    </location>
</feature>
<reference key="1">
    <citation type="journal article" date="2002" name="Nucleic Acids Res.">
        <title>The complete genomic sequence of Mycoplasma penetrans, an intracellular bacterial pathogen in humans.</title>
        <authorList>
            <person name="Sasaki Y."/>
            <person name="Ishikawa J."/>
            <person name="Yamashita A."/>
            <person name="Oshima K."/>
            <person name="Kenri T."/>
            <person name="Furuya K."/>
            <person name="Yoshino C."/>
            <person name="Horino A."/>
            <person name="Shiba T."/>
            <person name="Sasaki T."/>
            <person name="Hattori M."/>
        </authorList>
    </citation>
    <scope>NUCLEOTIDE SEQUENCE [LARGE SCALE GENOMIC DNA]</scope>
    <source>
        <strain>HF-2</strain>
    </source>
</reference>